<protein>
    <recommendedName>
        <fullName evidence="1">Chaperone protein DnaK</fullName>
    </recommendedName>
    <alternativeName>
        <fullName evidence="1">HSP70</fullName>
    </alternativeName>
    <alternativeName>
        <fullName evidence="1">Heat shock 70 kDa protein</fullName>
    </alternativeName>
    <alternativeName>
        <fullName evidence="1">Heat shock protein 70</fullName>
    </alternativeName>
</protein>
<keyword id="KW-0067">ATP-binding</keyword>
<keyword id="KW-0143">Chaperone</keyword>
<keyword id="KW-0547">Nucleotide-binding</keyword>
<keyword id="KW-0597">Phosphoprotein</keyword>
<keyword id="KW-1185">Reference proteome</keyword>
<keyword id="KW-0346">Stress response</keyword>
<comment type="function">
    <text evidence="1">Acts as a chaperone.</text>
</comment>
<comment type="induction">
    <text evidence="1">By stress conditions e.g. heat shock.</text>
</comment>
<comment type="similarity">
    <text evidence="1">Belongs to the heat shock protein 70 family.</text>
</comment>
<feature type="chain" id="PRO_1000059590" description="Chaperone protein DnaK">
    <location>
        <begin position="1"/>
        <end position="621"/>
    </location>
</feature>
<feature type="region of interest" description="Disordered" evidence="2">
    <location>
        <begin position="476"/>
        <end position="508"/>
    </location>
</feature>
<feature type="region of interest" description="Disordered" evidence="2">
    <location>
        <begin position="521"/>
        <end position="559"/>
    </location>
</feature>
<feature type="region of interest" description="Disordered" evidence="2">
    <location>
        <begin position="578"/>
        <end position="621"/>
    </location>
</feature>
<feature type="compositionally biased region" description="Basic and acidic residues" evidence="2">
    <location>
        <begin position="486"/>
        <end position="508"/>
    </location>
</feature>
<feature type="compositionally biased region" description="Low complexity" evidence="2">
    <location>
        <begin position="588"/>
        <end position="601"/>
    </location>
</feature>
<feature type="compositionally biased region" description="Basic and acidic residues" evidence="2">
    <location>
        <begin position="610"/>
        <end position="621"/>
    </location>
</feature>
<feature type="modified residue" description="Phosphothreonine; by autocatalysis" evidence="1">
    <location>
        <position position="176"/>
    </location>
</feature>
<name>DNAK_LIMRD</name>
<dbReference type="EMBL" id="CP000705">
    <property type="protein sequence ID" value="ABQ82971.1"/>
    <property type="molecule type" value="Genomic_DNA"/>
</dbReference>
<dbReference type="RefSeq" id="WP_003668169.1">
    <property type="nucleotide sequence ID" value="NC_009513.1"/>
</dbReference>
<dbReference type="SMR" id="A5VJE7"/>
<dbReference type="STRING" id="557436.Lreu_0706"/>
<dbReference type="KEGG" id="lre:Lreu_0706"/>
<dbReference type="PATRIC" id="fig|557436.17.peg.549"/>
<dbReference type="eggNOG" id="COG0443">
    <property type="taxonomic scope" value="Bacteria"/>
</dbReference>
<dbReference type="HOGENOM" id="CLU_005965_2_4_9"/>
<dbReference type="Proteomes" id="UP000001991">
    <property type="component" value="Chromosome"/>
</dbReference>
<dbReference type="GO" id="GO:0005524">
    <property type="term" value="F:ATP binding"/>
    <property type="evidence" value="ECO:0007669"/>
    <property type="project" value="UniProtKB-UniRule"/>
</dbReference>
<dbReference type="GO" id="GO:0140662">
    <property type="term" value="F:ATP-dependent protein folding chaperone"/>
    <property type="evidence" value="ECO:0007669"/>
    <property type="project" value="InterPro"/>
</dbReference>
<dbReference type="GO" id="GO:0051082">
    <property type="term" value="F:unfolded protein binding"/>
    <property type="evidence" value="ECO:0007669"/>
    <property type="project" value="InterPro"/>
</dbReference>
<dbReference type="CDD" id="cd10234">
    <property type="entry name" value="ASKHA_NBD_HSP70_DnaK-like"/>
    <property type="match status" value="1"/>
</dbReference>
<dbReference type="FunFam" id="2.60.34.10:FF:000014">
    <property type="entry name" value="Chaperone protein DnaK HSP70"/>
    <property type="match status" value="1"/>
</dbReference>
<dbReference type="FunFam" id="1.20.1270.10:FF:000001">
    <property type="entry name" value="Molecular chaperone DnaK"/>
    <property type="match status" value="1"/>
</dbReference>
<dbReference type="FunFam" id="3.30.420.40:FF:000071">
    <property type="entry name" value="Molecular chaperone DnaK"/>
    <property type="match status" value="1"/>
</dbReference>
<dbReference type="FunFam" id="3.90.640.10:FF:000003">
    <property type="entry name" value="Molecular chaperone DnaK"/>
    <property type="match status" value="1"/>
</dbReference>
<dbReference type="Gene3D" id="1.20.1270.10">
    <property type="match status" value="1"/>
</dbReference>
<dbReference type="Gene3D" id="3.30.420.40">
    <property type="match status" value="2"/>
</dbReference>
<dbReference type="Gene3D" id="3.90.640.10">
    <property type="entry name" value="Actin, Chain A, domain 4"/>
    <property type="match status" value="1"/>
</dbReference>
<dbReference type="Gene3D" id="2.60.34.10">
    <property type="entry name" value="Substrate Binding Domain Of DNAk, Chain A, domain 1"/>
    <property type="match status" value="1"/>
</dbReference>
<dbReference type="HAMAP" id="MF_00332">
    <property type="entry name" value="DnaK"/>
    <property type="match status" value="1"/>
</dbReference>
<dbReference type="InterPro" id="IPR043129">
    <property type="entry name" value="ATPase_NBD"/>
</dbReference>
<dbReference type="InterPro" id="IPR012725">
    <property type="entry name" value="Chaperone_DnaK"/>
</dbReference>
<dbReference type="InterPro" id="IPR018181">
    <property type="entry name" value="Heat_shock_70_CS"/>
</dbReference>
<dbReference type="InterPro" id="IPR029048">
    <property type="entry name" value="HSP70_C_sf"/>
</dbReference>
<dbReference type="InterPro" id="IPR029047">
    <property type="entry name" value="HSP70_peptide-bd_sf"/>
</dbReference>
<dbReference type="InterPro" id="IPR013126">
    <property type="entry name" value="Hsp_70_fam"/>
</dbReference>
<dbReference type="NCBIfam" id="NF001413">
    <property type="entry name" value="PRK00290.1"/>
    <property type="match status" value="1"/>
</dbReference>
<dbReference type="NCBIfam" id="TIGR02350">
    <property type="entry name" value="prok_dnaK"/>
    <property type="match status" value="1"/>
</dbReference>
<dbReference type="PANTHER" id="PTHR19375">
    <property type="entry name" value="HEAT SHOCK PROTEIN 70KDA"/>
    <property type="match status" value="1"/>
</dbReference>
<dbReference type="Pfam" id="PF00012">
    <property type="entry name" value="HSP70"/>
    <property type="match status" value="2"/>
</dbReference>
<dbReference type="PRINTS" id="PR00301">
    <property type="entry name" value="HEATSHOCK70"/>
</dbReference>
<dbReference type="SUPFAM" id="SSF53067">
    <property type="entry name" value="Actin-like ATPase domain"/>
    <property type="match status" value="2"/>
</dbReference>
<dbReference type="SUPFAM" id="SSF100934">
    <property type="entry name" value="Heat shock protein 70kD (HSP70), C-terminal subdomain"/>
    <property type="match status" value="1"/>
</dbReference>
<dbReference type="SUPFAM" id="SSF100920">
    <property type="entry name" value="Heat shock protein 70kD (HSP70), peptide-binding domain"/>
    <property type="match status" value="1"/>
</dbReference>
<dbReference type="PROSITE" id="PS00297">
    <property type="entry name" value="HSP70_1"/>
    <property type="match status" value="1"/>
</dbReference>
<dbReference type="PROSITE" id="PS00329">
    <property type="entry name" value="HSP70_2"/>
    <property type="match status" value="1"/>
</dbReference>
<dbReference type="PROSITE" id="PS01036">
    <property type="entry name" value="HSP70_3"/>
    <property type="match status" value="1"/>
</dbReference>
<accession>A5VJE7</accession>
<gene>
    <name evidence="1" type="primary">dnaK</name>
    <name type="ordered locus">Lreu_0706</name>
</gene>
<sequence>MASNKIIGIDLGTTNSAVAVMEGNEPKIITNPEGSRTTPSVVSFKNGETQVGEVAKRQAITNPNTISSIKSHMGEAGYTVEVDGKKYTPQEISAMILQYLKKYAEDYIGDTVTQAVITVPAYFNDAQRQATKDAGKIAGLDVKRIINEPTASSLAYGLDKKDKDEKILVYDLGGGTFDVSILELGDGVFQVLSTNGDTHLGGDDFDQKIMDWLIDGFKEEHGVDLSQDKMALQRLKDAAEKAKKDLSGVQEAQISLPFISAGENGPLHLEKTLSRAQFNQLTNDLVERTKQPVLNALKDADLTFDDIDEVILNGGSTRIPAVQEMVKELTGKEPNHSINPDEAVALGAAIQGGVLTGDVKDVVLLDVTPLSLGIETMGGVFTKLIDRNTTIPTSKSQIFSTAADNQPAVDIHVLQGERPMAADNKTLGNFQLTDIPAAPRGVPQIKVTFDIDKNGIVNVSAEDQGTHKKQNITIKSNSGLSDEEIERMKKDAEEHAEADKKKKEEVDLKNEVDQELFQVDKTLKEVKGKVPEDDIKKAESARDELKKAKESGNLDEMKAKKDALNKVIQDLSVKLYQQAQGAQGGAANGQPGDSQQNGNDNGNDDNTVDGDFKDVTPDDKK</sequence>
<organism>
    <name type="scientific">Limosilactobacillus reuteri (strain DSM 20016)</name>
    <name type="common">Lactobacillus reuteri</name>
    <dbReference type="NCBI Taxonomy" id="557436"/>
    <lineage>
        <taxon>Bacteria</taxon>
        <taxon>Bacillati</taxon>
        <taxon>Bacillota</taxon>
        <taxon>Bacilli</taxon>
        <taxon>Lactobacillales</taxon>
        <taxon>Lactobacillaceae</taxon>
        <taxon>Limosilactobacillus</taxon>
    </lineage>
</organism>
<reference key="1">
    <citation type="journal article" date="2011" name="PLoS Genet.">
        <title>The evolution of host specialization in the vertebrate gut symbiont Lactobacillus reuteri.</title>
        <authorList>
            <person name="Frese S.A."/>
            <person name="Benson A.K."/>
            <person name="Tannock G.W."/>
            <person name="Loach D.M."/>
            <person name="Kim J."/>
            <person name="Zhang M."/>
            <person name="Oh P.L."/>
            <person name="Heng N.C."/>
            <person name="Patil P.B."/>
            <person name="Juge N."/>
            <person name="Mackenzie D.A."/>
            <person name="Pearson B.M."/>
            <person name="Lapidus A."/>
            <person name="Dalin E."/>
            <person name="Tice H."/>
            <person name="Goltsman E."/>
            <person name="Land M."/>
            <person name="Hauser L."/>
            <person name="Ivanova N."/>
            <person name="Kyrpides N.C."/>
            <person name="Walter J."/>
        </authorList>
    </citation>
    <scope>NUCLEOTIDE SEQUENCE [LARGE SCALE GENOMIC DNA]</scope>
    <source>
        <strain>DSM 20016</strain>
    </source>
</reference>
<evidence type="ECO:0000255" key="1">
    <source>
        <dbReference type="HAMAP-Rule" id="MF_00332"/>
    </source>
</evidence>
<evidence type="ECO:0000256" key="2">
    <source>
        <dbReference type="SAM" id="MobiDB-lite"/>
    </source>
</evidence>
<proteinExistence type="inferred from homology"/>